<sequence length="131" mass="14094">MSWQTYVDEHLMCEIEGLHLASTAIIGHAGTVWAQSTAFPQFKPEEITGIMKDFDEPGHLAPTGMFVAGAKYMVIQGEPGAVIRGKKGAGGITIKKTGQALVVGIYDEPMTPGQCNMVVERLGDYLLEQGL</sequence>
<reference key="1">
    <citation type="journal article" date="2012" name="PLoS ONE">
        <title>Characterization of profilin polymorphism in pollen with a focus on multifunctionality.</title>
        <authorList>
            <person name="Jimenez-Lopez J.C."/>
            <person name="Morales S."/>
            <person name="Castro A.J."/>
            <person name="Volkmann D."/>
            <person name="Rodriguez-Garcia M.I."/>
            <person name="Alche Jde D."/>
        </authorList>
    </citation>
    <scope>NUCLEOTIDE SEQUENCE [MRNA]</scope>
    <scope>POLYMORPHISM</scope>
    <source>
        <strain>cv. Lechin de Granada</strain>
    </source>
</reference>
<reference key="2">
    <citation type="journal article" date="2013" name="PLoS ONE">
        <title>Analysis of the effects of polymorphism on pollen profilin structural functionality and the generation of conformational, T- and B-cell epitopes.</title>
        <authorList>
            <person name="Jimenez-Lopez J.C."/>
            <person name="Rodriguez-Garcia M.I."/>
            <person name="Alche J.D."/>
        </authorList>
    </citation>
    <scope>3D-STRUCTURE MODELING</scope>
    <scope>DISULFIDE BOND</scope>
</reference>
<organism>
    <name type="scientific">Olea europaea</name>
    <name type="common">Common olive</name>
    <dbReference type="NCBI Taxonomy" id="4146"/>
    <lineage>
        <taxon>Eukaryota</taxon>
        <taxon>Viridiplantae</taxon>
        <taxon>Streptophyta</taxon>
        <taxon>Embryophyta</taxon>
        <taxon>Tracheophyta</taxon>
        <taxon>Spermatophyta</taxon>
        <taxon>Magnoliopsida</taxon>
        <taxon>eudicotyledons</taxon>
        <taxon>Gunneridae</taxon>
        <taxon>Pentapetalae</taxon>
        <taxon>asterids</taxon>
        <taxon>lamiids</taxon>
        <taxon>Lamiales</taxon>
        <taxon>Oleaceae</taxon>
        <taxon>Oleeae</taxon>
        <taxon>Olea</taxon>
    </lineage>
</organism>
<protein>
    <recommendedName>
        <fullName>Profilin-3</fullName>
    </recommendedName>
    <alternativeName>
        <fullName>Pollen allergen Ole e 2</fullName>
    </alternativeName>
    <allergenName>Ole e 2</allergenName>
</protein>
<accession>A4GFC0</accession>
<evidence type="ECO:0000250" key="1"/>
<evidence type="ECO:0000305" key="2"/>
<evidence type="ECO:0000305" key="3">
    <source>
    </source>
</evidence>
<dbReference type="EMBL" id="DQ640906">
    <property type="protein sequence ID" value="ABG33902.1"/>
    <property type="molecule type" value="mRNA"/>
</dbReference>
<dbReference type="SMR" id="A4GFC0"/>
<dbReference type="Allergome" id="490">
    <property type="allergen name" value="Ole e 2"/>
</dbReference>
<dbReference type="GO" id="GO:0005938">
    <property type="term" value="C:cell cortex"/>
    <property type="evidence" value="ECO:0007669"/>
    <property type="project" value="TreeGrafter"/>
</dbReference>
<dbReference type="GO" id="GO:0005856">
    <property type="term" value="C:cytoskeleton"/>
    <property type="evidence" value="ECO:0007669"/>
    <property type="project" value="UniProtKB-SubCell"/>
</dbReference>
<dbReference type="GO" id="GO:0003785">
    <property type="term" value="F:actin monomer binding"/>
    <property type="evidence" value="ECO:0007669"/>
    <property type="project" value="TreeGrafter"/>
</dbReference>
<dbReference type="CDD" id="cd00148">
    <property type="entry name" value="PROF"/>
    <property type="match status" value="1"/>
</dbReference>
<dbReference type="FunFam" id="3.30.450.30:FF:000001">
    <property type="entry name" value="Profilin"/>
    <property type="match status" value="1"/>
</dbReference>
<dbReference type="Gene3D" id="3.30.450.30">
    <property type="entry name" value="Dynein light chain 2a, cytoplasmic"/>
    <property type="match status" value="1"/>
</dbReference>
<dbReference type="InterPro" id="IPR048278">
    <property type="entry name" value="PFN"/>
</dbReference>
<dbReference type="InterPro" id="IPR005455">
    <property type="entry name" value="PFN_euk"/>
</dbReference>
<dbReference type="InterPro" id="IPR036140">
    <property type="entry name" value="PFN_sf"/>
</dbReference>
<dbReference type="InterPro" id="IPR027310">
    <property type="entry name" value="Profilin_CS"/>
</dbReference>
<dbReference type="PANTHER" id="PTHR11604">
    <property type="entry name" value="PROFILIN"/>
    <property type="match status" value="1"/>
</dbReference>
<dbReference type="PANTHER" id="PTHR11604:SF31">
    <property type="entry name" value="PROFILIN"/>
    <property type="match status" value="1"/>
</dbReference>
<dbReference type="Pfam" id="PF00235">
    <property type="entry name" value="Profilin"/>
    <property type="match status" value="1"/>
</dbReference>
<dbReference type="PRINTS" id="PR00392">
    <property type="entry name" value="PROFILIN"/>
</dbReference>
<dbReference type="PRINTS" id="PR01640">
    <property type="entry name" value="PROFILINPLNT"/>
</dbReference>
<dbReference type="SMART" id="SM00392">
    <property type="entry name" value="PROF"/>
    <property type="match status" value="1"/>
</dbReference>
<dbReference type="SUPFAM" id="SSF55770">
    <property type="entry name" value="Profilin (actin-binding protein)"/>
    <property type="match status" value="1"/>
</dbReference>
<dbReference type="PROSITE" id="PS00414">
    <property type="entry name" value="PROFILIN"/>
    <property type="match status" value="1"/>
</dbReference>
<name>PROCE_OLEEU</name>
<feature type="initiator methionine" description="Removed" evidence="1">
    <location>
        <position position="1"/>
    </location>
</feature>
<feature type="chain" id="PRO_0000425048" description="Profilin-3">
    <location>
        <begin position="2"/>
        <end position="131"/>
    </location>
</feature>
<feature type="short sequence motif" description="Involved in PIP2 interaction">
    <location>
        <begin position="81"/>
        <end position="97"/>
    </location>
</feature>
<feature type="modified residue" description="Phosphothreonine" evidence="1">
    <location>
        <position position="111"/>
    </location>
</feature>
<feature type="disulfide bond" evidence="3">
    <location>
        <begin position="13"/>
        <end position="115"/>
    </location>
</feature>
<comment type="function">
    <text evidence="1">Binds to actin and affects the structure of the cytoskeleton. At high concentrations, profilin prevents the polymerization of actin, whereas it enhances it at low concentrations (By similarity).</text>
</comment>
<comment type="subunit">
    <text evidence="1">Occurs in many kinds of cells as a complex with monomeric actin in a 1:1 ratio.</text>
</comment>
<comment type="subcellular location">
    <subcellularLocation>
        <location evidence="1">Cytoplasm</location>
        <location evidence="1">Cytoskeleton</location>
    </subcellularLocation>
</comment>
<comment type="PTM">
    <text evidence="1">Phosphorylated by MAP kinases.</text>
</comment>
<comment type="polymorphism">
    <text>Several isoforms of the allergen exist due to polymorphism.</text>
</comment>
<comment type="allergen">
    <text>Causes an allergic reaction in human.</text>
</comment>
<comment type="miscellaneous">
    <text evidence="3">The variability of the residues taking part of IgE-binding epitopes might be responsible of the difference in cross-reactivity among olive pollen cultivars, and between distantly related pollen species, leading to a variable range of allergy reactions among atopic patients.</text>
</comment>
<comment type="similarity">
    <text evidence="2">Belongs to the profilin family.</text>
</comment>
<keyword id="KW-0009">Actin-binding</keyword>
<keyword id="KW-0020">Allergen</keyword>
<keyword id="KW-0963">Cytoplasm</keyword>
<keyword id="KW-0206">Cytoskeleton</keyword>
<keyword id="KW-1015">Disulfide bond</keyword>
<keyword id="KW-0597">Phosphoprotein</keyword>
<proteinExistence type="evidence at protein level"/>